<dbReference type="EMBL" id="Z46257">
    <property type="protein sequence ID" value="CAA86362.1"/>
    <property type="molecule type" value="Genomic_DNA"/>
</dbReference>
<dbReference type="EMBL" id="AL583924">
    <property type="protein sequence ID" value="CAC30953.1"/>
    <property type="molecule type" value="Genomic_DNA"/>
</dbReference>
<dbReference type="PIR" id="S77658">
    <property type="entry name" value="S77658"/>
</dbReference>
<dbReference type="RefSeq" id="NP_302349.1">
    <property type="nucleotide sequence ID" value="NC_002677.1"/>
</dbReference>
<dbReference type="RefSeq" id="WP_010908669.1">
    <property type="nucleotide sequence ID" value="NC_002677.1"/>
</dbReference>
<dbReference type="STRING" id="272631.gene:17575850"/>
<dbReference type="KEGG" id="mle:ML1998"/>
<dbReference type="PATRIC" id="fig|272631.5.peg.3758"/>
<dbReference type="Leproma" id="ML1998"/>
<dbReference type="eggNOG" id="COG3336">
    <property type="taxonomic scope" value="Bacteria"/>
</dbReference>
<dbReference type="HOGENOM" id="CLU_016803_0_0_11"/>
<dbReference type="OrthoDB" id="5241646at2"/>
<dbReference type="Proteomes" id="UP000000806">
    <property type="component" value="Chromosome"/>
</dbReference>
<dbReference type="GO" id="GO:0005886">
    <property type="term" value="C:plasma membrane"/>
    <property type="evidence" value="ECO:0007669"/>
    <property type="project" value="UniProtKB-SubCell"/>
</dbReference>
<dbReference type="InterPro" id="IPR019108">
    <property type="entry name" value="Caa3_assmbl_CtaG-rel"/>
</dbReference>
<dbReference type="Pfam" id="PF09678">
    <property type="entry name" value="Caa3_CtaG"/>
    <property type="match status" value="1"/>
</dbReference>
<name>Y1998_MYCLE</name>
<gene>
    <name type="ordered locus">ML1998</name>
    <name type="ORF">o659</name>
</gene>
<sequence length="659" mass="71246">MQTDEPTGTATSAIRIPPLISLRTTLMVAGLLGNVVAVAAYGLFSRTERYGAVGNPDPGSFIGVAEPVGYFGASLSSALCLGALIYFVMMVWPQADGLIDAQAFRIHLAEERVSIGWLAFALTMVVVQAANDSGVTPAELRTGAALFNAITTSETSRAWIVVTICALLVTLTLRVIIRYSDHFVLLIPAVIGVIATAVTGNAGQGPDHDYATSAVIVFALAIAALSGLKITAALTEVTPSRAVLIVQVVCGVLALAYGAELVYLLSPGAAMIDSDFGRLGLVAGVLVTLVCFSDCWALVMGRPHSDHRTRLTALAMMAVTAATAAMSVQTAPRFLTHRFTAWDVFLGYELPQPPNIVRFFTVWRFDSLIGATAIVLGIGYVAGFVRVRRAGNTWPVGRLVAWLTGCVALVFTSSSGVRTYGSAMFSVHMAEHMTLNMFIPVLLVLGGPVTLALRALSAAGDGQQPGPREWLTWLMHSSVTAFLSHPVTNFILFVGSPYIVYFTPLFDTLVRYHWGHEFMAIHFLLVGYIFYWAIIGIDPGPRRLPYLARIGLLFAVMPFHAFFGIALMTMTSAISAEFYRSVNLPWLASIDADQHIGGAIAWSATELPVIIVIVALMAQWARQDHRVAVREDRHADSTYADDDLNAYNAMLRELSRMRR</sequence>
<organism>
    <name type="scientific">Mycobacterium leprae (strain TN)</name>
    <dbReference type="NCBI Taxonomy" id="272631"/>
    <lineage>
        <taxon>Bacteria</taxon>
        <taxon>Bacillati</taxon>
        <taxon>Actinomycetota</taxon>
        <taxon>Actinomycetes</taxon>
        <taxon>Mycobacteriales</taxon>
        <taxon>Mycobacteriaceae</taxon>
        <taxon>Mycobacterium</taxon>
    </lineage>
</organism>
<comment type="subcellular location">
    <subcellularLocation>
        <location evidence="2">Cell membrane</location>
        <topology evidence="2">Multi-pass membrane protein</topology>
    </subcellularLocation>
</comment>
<comment type="similarity">
    <text evidence="2">To M.tuberculosis Rv0102.</text>
</comment>
<accession>P53525</accession>
<reference key="1">
    <citation type="journal article" date="1995" name="Mol. Microbiol.">
        <title>The Mycobacterium leprae genome: systematic sequence analysis identifies key catabolic enzymes, ATP-dependent transport systems and a novel polA locus associated with genomic variability.</title>
        <authorList>
            <person name="Fsihi H."/>
            <person name="Cole S.T."/>
        </authorList>
    </citation>
    <scope>NUCLEOTIDE SEQUENCE [GENOMIC DNA]</scope>
</reference>
<reference key="2">
    <citation type="journal article" date="2001" name="Nature">
        <title>Massive gene decay in the leprosy bacillus.</title>
        <authorList>
            <person name="Cole S.T."/>
            <person name="Eiglmeier K."/>
            <person name="Parkhill J."/>
            <person name="James K.D."/>
            <person name="Thomson N.R."/>
            <person name="Wheeler P.R."/>
            <person name="Honore N."/>
            <person name="Garnier T."/>
            <person name="Churcher C.M."/>
            <person name="Harris D.E."/>
            <person name="Mungall K.L."/>
            <person name="Basham D."/>
            <person name="Brown D."/>
            <person name="Chillingworth T."/>
            <person name="Connor R."/>
            <person name="Davies R.M."/>
            <person name="Devlin K."/>
            <person name="Duthoy S."/>
            <person name="Feltwell T."/>
            <person name="Fraser A."/>
            <person name="Hamlin N."/>
            <person name="Holroyd S."/>
            <person name="Hornsby T."/>
            <person name="Jagels K."/>
            <person name="Lacroix C."/>
            <person name="Maclean J."/>
            <person name="Moule S."/>
            <person name="Murphy L.D."/>
            <person name="Oliver K."/>
            <person name="Quail M.A."/>
            <person name="Rajandream M.A."/>
            <person name="Rutherford K.M."/>
            <person name="Rutter S."/>
            <person name="Seeger K."/>
            <person name="Simon S."/>
            <person name="Simmonds M."/>
            <person name="Skelton J."/>
            <person name="Squares R."/>
            <person name="Squares S."/>
            <person name="Stevens K."/>
            <person name="Taylor K."/>
            <person name="Whitehead S."/>
            <person name="Woodward J.R."/>
            <person name="Barrell B.G."/>
        </authorList>
    </citation>
    <scope>NUCLEOTIDE SEQUENCE [LARGE SCALE GENOMIC DNA]</scope>
    <source>
        <strain>TN</strain>
    </source>
</reference>
<keyword id="KW-1003">Cell membrane</keyword>
<keyword id="KW-0472">Membrane</keyword>
<keyword id="KW-1185">Reference proteome</keyword>
<keyword id="KW-0812">Transmembrane</keyword>
<keyword id="KW-1133">Transmembrane helix</keyword>
<proteinExistence type="predicted"/>
<protein>
    <recommendedName>
        <fullName>Uncharacterized protein ML1998</fullName>
    </recommendedName>
</protein>
<evidence type="ECO:0000255" key="1"/>
<evidence type="ECO:0000305" key="2"/>
<feature type="chain" id="PRO_0000103674" description="Uncharacterized protein ML1998">
    <location>
        <begin position="1"/>
        <end position="659"/>
    </location>
</feature>
<feature type="transmembrane region" description="Helical" evidence="1">
    <location>
        <begin position="24"/>
        <end position="44"/>
    </location>
</feature>
<feature type="transmembrane region" description="Helical" evidence="1">
    <location>
        <begin position="71"/>
        <end position="91"/>
    </location>
</feature>
<feature type="transmembrane region" description="Helical" evidence="1">
    <location>
        <begin position="115"/>
        <end position="135"/>
    </location>
</feature>
<feature type="transmembrane region" description="Helical" evidence="1">
    <location>
        <begin position="157"/>
        <end position="177"/>
    </location>
</feature>
<feature type="transmembrane region" description="Helical" evidence="1">
    <location>
        <begin position="183"/>
        <end position="203"/>
    </location>
</feature>
<feature type="transmembrane region" description="Helical" evidence="1">
    <location>
        <begin position="214"/>
        <end position="234"/>
    </location>
</feature>
<feature type="transmembrane region" description="Helical" evidence="1">
    <location>
        <begin position="242"/>
        <end position="262"/>
    </location>
</feature>
<feature type="transmembrane region" description="Helical" evidence="1">
    <location>
        <begin position="279"/>
        <end position="299"/>
    </location>
</feature>
<feature type="transmembrane region" description="Helical" evidence="1">
    <location>
        <begin position="311"/>
        <end position="331"/>
    </location>
</feature>
<feature type="transmembrane region" description="Helical" evidence="1">
    <location>
        <begin position="365"/>
        <end position="385"/>
    </location>
</feature>
<feature type="transmembrane region" description="Helical" evidence="1">
    <location>
        <begin position="393"/>
        <end position="413"/>
    </location>
</feature>
<feature type="transmembrane region" description="Helical" evidence="1">
    <location>
        <begin position="433"/>
        <end position="453"/>
    </location>
</feature>
<feature type="transmembrane region" description="Helical" evidence="1">
    <location>
        <begin position="490"/>
        <end position="510"/>
    </location>
</feature>
<feature type="transmembrane region" description="Helical" evidence="1">
    <location>
        <begin position="517"/>
        <end position="537"/>
    </location>
</feature>
<feature type="transmembrane region" description="Helical" evidence="1">
    <location>
        <begin position="550"/>
        <end position="570"/>
    </location>
</feature>
<feature type="transmembrane region" description="Helical" evidence="1">
    <location>
        <begin position="596"/>
        <end position="616"/>
    </location>
</feature>